<protein>
    <recommendedName>
        <fullName>Required for respiratory growth protein 9, mitochondrial</fullName>
    </recommendedName>
</protein>
<feature type="transit peptide" description="Mitochondrion" evidence="2">
    <location>
        <begin position="1"/>
        <end position="65"/>
    </location>
</feature>
<feature type="chain" id="PRO_0000407952" description="Required for respiratory growth protein 9, mitochondrial">
    <location>
        <begin position="66"/>
        <end position="280"/>
    </location>
</feature>
<feature type="region of interest" description="Disordered" evidence="3">
    <location>
        <begin position="63"/>
        <end position="166"/>
    </location>
</feature>
<feature type="compositionally biased region" description="Polar residues" evidence="3">
    <location>
        <begin position="63"/>
        <end position="72"/>
    </location>
</feature>
<feature type="compositionally biased region" description="Low complexity" evidence="3">
    <location>
        <begin position="73"/>
        <end position="86"/>
    </location>
</feature>
<reference key="1">
    <citation type="journal article" date="2008" name="PLoS Genet.">
        <title>Genomic islands in the pathogenic filamentous fungus Aspergillus fumigatus.</title>
        <authorList>
            <person name="Fedorova N.D."/>
            <person name="Khaldi N."/>
            <person name="Joardar V.S."/>
            <person name="Maiti R."/>
            <person name="Amedeo P."/>
            <person name="Anderson M.J."/>
            <person name="Crabtree J."/>
            <person name="Silva J.C."/>
            <person name="Badger J.H."/>
            <person name="Albarraq A."/>
            <person name="Angiuoli S."/>
            <person name="Bussey H."/>
            <person name="Bowyer P."/>
            <person name="Cotty P.J."/>
            <person name="Dyer P.S."/>
            <person name="Egan A."/>
            <person name="Galens K."/>
            <person name="Fraser-Liggett C.M."/>
            <person name="Haas B.J."/>
            <person name="Inman J.M."/>
            <person name="Kent R."/>
            <person name="Lemieux S."/>
            <person name="Malavazi I."/>
            <person name="Orvis J."/>
            <person name="Roemer T."/>
            <person name="Ronning C.M."/>
            <person name="Sundaram J.P."/>
            <person name="Sutton G."/>
            <person name="Turner G."/>
            <person name="Venter J.C."/>
            <person name="White O.R."/>
            <person name="Whitty B.R."/>
            <person name="Youngman P."/>
            <person name="Wolfe K.H."/>
            <person name="Goldman G.H."/>
            <person name="Wortman J.R."/>
            <person name="Jiang B."/>
            <person name="Denning D.W."/>
            <person name="Nierman W.C."/>
        </authorList>
    </citation>
    <scope>NUCLEOTIDE SEQUENCE [LARGE SCALE GENOMIC DNA]</scope>
    <source>
        <strain>ATCC 1020 / DSM 3700 / CBS 544.65 / FGSC A1164 / JCM 1740 / NRRL 181 / WB 181</strain>
    </source>
</reference>
<sequence>MANSICIASSRLSLPTLLRNVFRSEFAADLGPRSEYKSLFAVQRAPLAYRRIRGPRQFSSLTLADDIPTTSKQPPSSAANVSSVPQPDEPAKTGAGEIRASSDPSEIVGSSPRTDSAKHKKASASEATIGAKPAANESSDKKCSGAPRTSSLSVLSKSKKKKEPWQIQKEALKKKFKEGWNPPKKLSPDALEGIRHLHAVAPDRFTTPVLAEQFQVSPEAIRRILKSKWRPSPEEMEKRRERWERRHDRIWSQMSELGLRRPKRSADKFSDVKVLYDKPV</sequence>
<comment type="function">
    <text evidence="1">Required for respiratory activity and maintenance and expression of the mitochondrial genome.</text>
</comment>
<comment type="subcellular location">
    <subcellularLocation>
        <location evidence="1">Mitochondrion</location>
    </subcellularLocation>
</comment>
<comment type="similarity">
    <text evidence="4">Belongs to the RRG9 family.</text>
</comment>
<evidence type="ECO:0000250" key="1"/>
<evidence type="ECO:0000255" key="2"/>
<evidence type="ECO:0000256" key="3">
    <source>
        <dbReference type="SAM" id="MobiDB-lite"/>
    </source>
</evidence>
<evidence type="ECO:0000305" key="4"/>
<proteinExistence type="inferred from homology"/>
<name>RRG9_NEOFI</name>
<organism>
    <name type="scientific">Neosartorya fischeri (strain ATCC 1020 / DSM 3700 / CBS 544.65 / FGSC A1164 / JCM 1740 / NRRL 181 / WB 181)</name>
    <name type="common">Aspergillus fischerianus</name>
    <dbReference type="NCBI Taxonomy" id="331117"/>
    <lineage>
        <taxon>Eukaryota</taxon>
        <taxon>Fungi</taxon>
        <taxon>Dikarya</taxon>
        <taxon>Ascomycota</taxon>
        <taxon>Pezizomycotina</taxon>
        <taxon>Eurotiomycetes</taxon>
        <taxon>Eurotiomycetidae</taxon>
        <taxon>Eurotiales</taxon>
        <taxon>Aspergillaceae</taxon>
        <taxon>Aspergillus</taxon>
        <taxon>Aspergillus subgen. Fumigati</taxon>
    </lineage>
</organism>
<accession>A1DHD8</accession>
<keyword id="KW-0496">Mitochondrion</keyword>
<keyword id="KW-1185">Reference proteome</keyword>
<keyword id="KW-0809">Transit peptide</keyword>
<gene>
    <name type="primary">rrg9</name>
    <name type="ORF">NFIA_087510</name>
</gene>
<dbReference type="EMBL" id="DS027696">
    <property type="protein sequence ID" value="EAW18795.1"/>
    <property type="molecule type" value="Genomic_DNA"/>
</dbReference>
<dbReference type="RefSeq" id="XP_001260692.1">
    <property type="nucleotide sequence ID" value="XM_001260691.1"/>
</dbReference>
<dbReference type="SMR" id="A1DHD8"/>
<dbReference type="EnsemblFungi" id="EAW18795">
    <property type="protein sequence ID" value="EAW18795"/>
    <property type="gene ID" value="NFIA_087510"/>
</dbReference>
<dbReference type="GeneID" id="4587250"/>
<dbReference type="KEGG" id="nfi:NFIA_087510"/>
<dbReference type="VEuPathDB" id="FungiDB:NFIA_087510"/>
<dbReference type="eggNOG" id="ENOG502S7IA">
    <property type="taxonomic scope" value="Eukaryota"/>
</dbReference>
<dbReference type="HOGENOM" id="CLU_047598_3_0_1"/>
<dbReference type="OMA" id="KPEKWQI"/>
<dbReference type="OrthoDB" id="5578174at2759"/>
<dbReference type="Proteomes" id="UP000006702">
    <property type="component" value="Unassembled WGS sequence"/>
</dbReference>
<dbReference type="GO" id="GO:0005739">
    <property type="term" value="C:mitochondrion"/>
    <property type="evidence" value="ECO:0007669"/>
    <property type="project" value="UniProtKB-SubCell"/>
</dbReference>
<dbReference type="GO" id="GO:0005634">
    <property type="term" value="C:nucleus"/>
    <property type="evidence" value="ECO:0007669"/>
    <property type="project" value="TreeGrafter"/>
</dbReference>
<dbReference type="InterPro" id="IPR010487">
    <property type="entry name" value="NGRN/Rrg9"/>
</dbReference>
<dbReference type="PANTHER" id="PTHR13475">
    <property type="entry name" value="NEUGRIN"/>
    <property type="match status" value="1"/>
</dbReference>
<dbReference type="PANTHER" id="PTHR13475:SF3">
    <property type="entry name" value="NEUGRIN"/>
    <property type="match status" value="1"/>
</dbReference>
<dbReference type="Pfam" id="PF06413">
    <property type="entry name" value="Neugrin"/>
    <property type="match status" value="1"/>
</dbReference>